<organism>
    <name type="scientific">Clostridium botulinum (strain ATCC 19397 / Type A)</name>
    <dbReference type="NCBI Taxonomy" id="441770"/>
    <lineage>
        <taxon>Bacteria</taxon>
        <taxon>Bacillati</taxon>
        <taxon>Bacillota</taxon>
        <taxon>Clostridia</taxon>
        <taxon>Eubacteriales</taxon>
        <taxon>Clostridiaceae</taxon>
        <taxon>Clostridium</taxon>
    </lineage>
</organism>
<keyword id="KW-0030">Aminoacyl-tRNA synthetase</keyword>
<keyword id="KW-0067">ATP-binding</keyword>
<keyword id="KW-0963">Cytoplasm</keyword>
<keyword id="KW-0436">Ligase</keyword>
<keyword id="KW-0479">Metal-binding</keyword>
<keyword id="KW-0547">Nucleotide-binding</keyword>
<keyword id="KW-0648">Protein biosynthesis</keyword>
<keyword id="KW-0862">Zinc</keyword>
<feature type="chain" id="PRO_0000330961" description="Glutamate--tRNA ligase">
    <location>
        <begin position="1"/>
        <end position="485"/>
    </location>
</feature>
<feature type="short sequence motif" description="'HIGH' region" evidence="1">
    <location>
        <begin position="11"/>
        <end position="21"/>
    </location>
</feature>
<feature type="short sequence motif" description="'KMSKS' region" evidence="1">
    <location>
        <begin position="252"/>
        <end position="256"/>
    </location>
</feature>
<feature type="binding site" evidence="1">
    <location>
        <position position="108"/>
    </location>
    <ligand>
        <name>Zn(2+)</name>
        <dbReference type="ChEBI" id="CHEBI:29105"/>
    </ligand>
</feature>
<feature type="binding site" evidence="1">
    <location>
        <position position="110"/>
    </location>
    <ligand>
        <name>Zn(2+)</name>
        <dbReference type="ChEBI" id="CHEBI:29105"/>
    </ligand>
</feature>
<feature type="binding site" evidence="1">
    <location>
        <position position="135"/>
    </location>
    <ligand>
        <name>Zn(2+)</name>
        <dbReference type="ChEBI" id="CHEBI:29105"/>
    </ligand>
</feature>
<feature type="binding site" evidence="1">
    <location>
        <position position="137"/>
    </location>
    <ligand>
        <name>Zn(2+)</name>
        <dbReference type="ChEBI" id="CHEBI:29105"/>
    </ligand>
</feature>
<feature type="binding site" evidence="1">
    <location>
        <position position="255"/>
    </location>
    <ligand>
        <name>ATP</name>
        <dbReference type="ChEBI" id="CHEBI:30616"/>
    </ligand>
</feature>
<sequence>MTNKVRTRFAPSPTGYMHVGNLRTALYAYLIAKHDNGDFILRIEDTDQERLVEGALDVIYNTLKITGLSHDEGPDIGGPVGPYVQSERRNIYIEYAEKLIEKGEAYYCFCSKERLDMLRANSEALKRPFRYDKHCIDLSKEEIDKKIAEGVPYVIRQKNPTTGSTSFHDEIYGDISVDNSELDDMILIKSDGLPTYNFANVVDDHLMGITHVVRGSEYLSSSPKYNRLYEAFGWDVPIYVHCPPIMKDEHHKLSKRNGDASFEDLMAKGYLKEAILNYIALLGWNPGGEKEVFSMEELIEAFNYRNINKAPAVFDTKKLKWMNGEYIRALSLDKFHEMALPYYEEALTRDLDTKKISELLHTRVEVLNEIPEQLDFFNNLLEYSPEMYIHKKMKTTYENSLKSLEEVLPKLEALENWTFENIKEVCMNLVKELEVKNGVVLWPIRTAVSGKQFTPGGAFEIADILGKEETLERIKIGIDKLKALQ</sequence>
<reference key="1">
    <citation type="journal article" date="2007" name="PLoS ONE">
        <title>Analysis of the neurotoxin complex genes in Clostridium botulinum A1-A4 and B1 strains: BoNT/A3, /Ba4 and /B1 clusters are located within plasmids.</title>
        <authorList>
            <person name="Smith T.J."/>
            <person name="Hill K.K."/>
            <person name="Foley B.T."/>
            <person name="Detter J.C."/>
            <person name="Munk A.C."/>
            <person name="Bruce D.C."/>
            <person name="Doggett N.A."/>
            <person name="Smith L.A."/>
            <person name="Marks J.D."/>
            <person name="Xie G."/>
            <person name="Brettin T.S."/>
        </authorList>
    </citation>
    <scope>NUCLEOTIDE SEQUENCE [LARGE SCALE GENOMIC DNA]</scope>
    <source>
        <strain>ATCC 19397 / Type A</strain>
    </source>
</reference>
<evidence type="ECO:0000255" key="1">
    <source>
        <dbReference type="HAMAP-Rule" id="MF_00022"/>
    </source>
</evidence>
<protein>
    <recommendedName>
        <fullName evidence="1">Glutamate--tRNA ligase</fullName>
        <ecNumber evidence="1">6.1.1.17</ecNumber>
    </recommendedName>
    <alternativeName>
        <fullName evidence="1">Glutamyl-tRNA synthetase</fullName>
        <shortName evidence="1">GluRS</shortName>
    </alternativeName>
</protein>
<comment type="function">
    <text evidence="1">Catalyzes the attachment of glutamate to tRNA(Glu) in a two-step reaction: glutamate is first activated by ATP to form Glu-AMP and then transferred to the acceptor end of tRNA(Glu).</text>
</comment>
<comment type="catalytic activity">
    <reaction evidence="1">
        <text>tRNA(Glu) + L-glutamate + ATP = L-glutamyl-tRNA(Glu) + AMP + diphosphate</text>
        <dbReference type="Rhea" id="RHEA:23540"/>
        <dbReference type="Rhea" id="RHEA-COMP:9663"/>
        <dbReference type="Rhea" id="RHEA-COMP:9680"/>
        <dbReference type="ChEBI" id="CHEBI:29985"/>
        <dbReference type="ChEBI" id="CHEBI:30616"/>
        <dbReference type="ChEBI" id="CHEBI:33019"/>
        <dbReference type="ChEBI" id="CHEBI:78442"/>
        <dbReference type="ChEBI" id="CHEBI:78520"/>
        <dbReference type="ChEBI" id="CHEBI:456215"/>
        <dbReference type="EC" id="6.1.1.17"/>
    </reaction>
</comment>
<comment type="cofactor">
    <cofactor evidence="1">
        <name>Zn(2+)</name>
        <dbReference type="ChEBI" id="CHEBI:29105"/>
    </cofactor>
    <text evidence="1">Binds 1 zinc ion per subunit.</text>
</comment>
<comment type="subunit">
    <text evidence="1">Monomer.</text>
</comment>
<comment type="subcellular location">
    <subcellularLocation>
        <location evidence="1">Cytoplasm</location>
    </subcellularLocation>
</comment>
<comment type="similarity">
    <text evidence="1">Belongs to the class-I aminoacyl-tRNA synthetase family. Glutamate--tRNA ligase type 1 subfamily.</text>
</comment>
<name>SYE_CLOB1</name>
<accession>A7FSY9</accession>
<gene>
    <name evidence="1" type="primary">gltX</name>
    <name type="ordered locus">CLB_1134</name>
</gene>
<proteinExistence type="inferred from homology"/>
<dbReference type="EC" id="6.1.1.17" evidence="1"/>
<dbReference type="EMBL" id="CP000726">
    <property type="protein sequence ID" value="ABS34374.1"/>
    <property type="molecule type" value="Genomic_DNA"/>
</dbReference>
<dbReference type="RefSeq" id="WP_003356788.1">
    <property type="nucleotide sequence ID" value="NC_009697.1"/>
</dbReference>
<dbReference type="SMR" id="A7FSY9"/>
<dbReference type="GeneID" id="5187077"/>
<dbReference type="KEGG" id="cba:CLB_1134"/>
<dbReference type="HOGENOM" id="CLU_015768_6_3_9"/>
<dbReference type="GO" id="GO:0005737">
    <property type="term" value="C:cytoplasm"/>
    <property type="evidence" value="ECO:0007669"/>
    <property type="project" value="UniProtKB-SubCell"/>
</dbReference>
<dbReference type="GO" id="GO:0005524">
    <property type="term" value="F:ATP binding"/>
    <property type="evidence" value="ECO:0007669"/>
    <property type="project" value="UniProtKB-UniRule"/>
</dbReference>
<dbReference type="GO" id="GO:0004818">
    <property type="term" value="F:glutamate-tRNA ligase activity"/>
    <property type="evidence" value="ECO:0007669"/>
    <property type="project" value="UniProtKB-UniRule"/>
</dbReference>
<dbReference type="GO" id="GO:0000049">
    <property type="term" value="F:tRNA binding"/>
    <property type="evidence" value="ECO:0007669"/>
    <property type="project" value="InterPro"/>
</dbReference>
<dbReference type="GO" id="GO:0008270">
    <property type="term" value="F:zinc ion binding"/>
    <property type="evidence" value="ECO:0007669"/>
    <property type="project" value="UniProtKB-UniRule"/>
</dbReference>
<dbReference type="GO" id="GO:0006424">
    <property type="term" value="P:glutamyl-tRNA aminoacylation"/>
    <property type="evidence" value="ECO:0007669"/>
    <property type="project" value="UniProtKB-UniRule"/>
</dbReference>
<dbReference type="CDD" id="cd00808">
    <property type="entry name" value="GluRS_core"/>
    <property type="match status" value="1"/>
</dbReference>
<dbReference type="FunFam" id="3.40.50.620:FF:000045">
    <property type="entry name" value="Glutamate--tRNA ligase, mitochondrial"/>
    <property type="match status" value="1"/>
</dbReference>
<dbReference type="Gene3D" id="1.10.10.350">
    <property type="match status" value="1"/>
</dbReference>
<dbReference type="Gene3D" id="3.40.50.620">
    <property type="entry name" value="HUPs"/>
    <property type="match status" value="1"/>
</dbReference>
<dbReference type="HAMAP" id="MF_00022">
    <property type="entry name" value="Glu_tRNA_synth_type1"/>
    <property type="match status" value="1"/>
</dbReference>
<dbReference type="InterPro" id="IPR045462">
    <property type="entry name" value="aa-tRNA-synth_I_cd-bd"/>
</dbReference>
<dbReference type="InterPro" id="IPR020751">
    <property type="entry name" value="aa-tRNA-synth_I_codon-bd_sub2"/>
</dbReference>
<dbReference type="InterPro" id="IPR001412">
    <property type="entry name" value="aa-tRNA-synth_I_CS"/>
</dbReference>
<dbReference type="InterPro" id="IPR008925">
    <property type="entry name" value="aa_tRNA-synth_I_cd-bd_sf"/>
</dbReference>
<dbReference type="InterPro" id="IPR004527">
    <property type="entry name" value="Glu-tRNA-ligase_bac/mito"/>
</dbReference>
<dbReference type="InterPro" id="IPR000924">
    <property type="entry name" value="Glu/Gln-tRNA-synth"/>
</dbReference>
<dbReference type="InterPro" id="IPR020058">
    <property type="entry name" value="Glu/Gln-tRNA-synth_Ib_cat-dom"/>
</dbReference>
<dbReference type="InterPro" id="IPR049940">
    <property type="entry name" value="GluQ/Sye"/>
</dbReference>
<dbReference type="InterPro" id="IPR033910">
    <property type="entry name" value="GluRS_core"/>
</dbReference>
<dbReference type="InterPro" id="IPR014729">
    <property type="entry name" value="Rossmann-like_a/b/a_fold"/>
</dbReference>
<dbReference type="NCBIfam" id="TIGR00464">
    <property type="entry name" value="gltX_bact"/>
    <property type="match status" value="1"/>
</dbReference>
<dbReference type="PANTHER" id="PTHR43311">
    <property type="entry name" value="GLUTAMATE--TRNA LIGASE"/>
    <property type="match status" value="1"/>
</dbReference>
<dbReference type="PANTHER" id="PTHR43311:SF2">
    <property type="entry name" value="GLUTAMATE--TRNA LIGASE, MITOCHONDRIAL-RELATED"/>
    <property type="match status" value="1"/>
</dbReference>
<dbReference type="Pfam" id="PF19269">
    <property type="entry name" value="Anticodon_2"/>
    <property type="match status" value="1"/>
</dbReference>
<dbReference type="Pfam" id="PF00749">
    <property type="entry name" value="tRNA-synt_1c"/>
    <property type="match status" value="1"/>
</dbReference>
<dbReference type="PRINTS" id="PR00987">
    <property type="entry name" value="TRNASYNTHGLU"/>
</dbReference>
<dbReference type="SUPFAM" id="SSF48163">
    <property type="entry name" value="An anticodon-binding domain of class I aminoacyl-tRNA synthetases"/>
    <property type="match status" value="1"/>
</dbReference>
<dbReference type="SUPFAM" id="SSF52374">
    <property type="entry name" value="Nucleotidylyl transferase"/>
    <property type="match status" value="1"/>
</dbReference>
<dbReference type="PROSITE" id="PS00178">
    <property type="entry name" value="AA_TRNA_LIGASE_I"/>
    <property type="match status" value="1"/>
</dbReference>